<protein>
    <recommendedName>
        <fullName evidence="1">Bacteriohemerythrin</fullName>
    </recommendedName>
</protein>
<name>HEMTB_PSEAB</name>
<reference key="1">
    <citation type="journal article" date="2006" name="Genome Biol.">
        <title>Genomic analysis reveals that Pseudomonas aeruginosa virulence is combinatorial.</title>
        <authorList>
            <person name="Lee D.G."/>
            <person name="Urbach J.M."/>
            <person name="Wu G."/>
            <person name="Liberati N.T."/>
            <person name="Feinbaum R.L."/>
            <person name="Miyata S."/>
            <person name="Diggins L.T."/>
            <person name="He J."/>
            <person name="Saucier M."/>
            <person name="Deziel E."/>
            <person name="Friedman L."/>
            <person name="Li L."/>
            <person name="Grills G."/>
            <person name="Montgomery K."/>
            <person name="Kucherlapati R."/>
            <person name="Rahme L.G."/>
            <person name="Ausubel F.M."/>
        </authorList>
    </citation>
    <scope>NUCLEOTIDE SEQUENCE [LARGE SCALE GENOMIC DNA]</scope>
    <source>
        <strain>UCBPP-PA14</strain>
    </source>
</reference>
<feature type="chain" id="PRO_1000017981" description="Bacteriohemerythrin">
    <location>
        <begin position="1"/>
        <end position="153"/>
    </location>
</feature>
<feature type="binding site" evidence="1">
    <location>
        <position position="21"/>
    </location>
    <ligand>
        <name>Fe cation</name>
        <dbReference type="ChEBI" id="CHEBI:24875"/>
        <label>1</label>
    </ligand>
</feature>
<feature type="binding site" evidence="1">
    <location>
        <position position="57"/>
    </location>
    <ligand>
        <name>Fe cation</name>
        <dbReference type="ChEBI" id="CHEBI:24875"/>
        <label>1</label>
    </ligand>
</feature>
<feature type="binding site" evidence="1">
    <location>
        <position position="61"/>
    </location>
    <ligand>
        <name>Fe cation</name>
        <dbReference type="ChEBI" id="CHEBI:24875"/>
        <label>1</label>
    </ligand>
</feature>
<feature type="binding site" evidence="1">
    <location>
        <position position="61"/>
    </location>
    <ligand>
        <name>Fe cation</name>
        <dbReference type="ChEBI" id="CHEBI:24875"/>
        <label>2</label>
    </ligand>
</feature>
<feature type="binding site" evidence="1">
    <location>
        <position position="76"/>
    </location>
    <ligand>
        <name>Fe cation</name>
        <dbReference type="ChEBI" id="CHEBI:24875"/>
        <label>2</label>
    </ligand>
</feature>
<feature type="binding site" evidence="1">
    <location>
        <position position="80"/>
    </location>
    <ligand>
        <name>Fe cation</name>
        <dbReference type="ChEBI" id="CHEBI:24875"/>
        <label>2</label>
    </ligand>
</feature>
<feature type="binding site" evidence="1">
    <location>
        <position position="115"/>
    </location>
    <ligand>
        <name>Fe cation</name>
        <dbReference type="ChEBI" id="CHEBI:24875"/>
        <label>2</label>
    </ligand>
</feature>
<feature type="binding site" evidence="1">
    <location>
        <position position="120"/>
    </location>
    <ligand>
        <name>Fe cation</name>
        <dbReference type="ChEBI" id="CHEBI:24875"/>
        <label>1</label>
    </ligand>
</feature>
<feature type="binding site" evidence="1">
    <location>
        <position position="120"/>
    </location>
    <ligand>
        <name>Fe cation</name>
        <dbReference type="ChEBI" id="CHEBI:24875"/>
        <label>2</label>
    </ligand>
</feature>
<gene>
    <name type="ordered locus">PA14_42860</name>
</gene>
<keyword id="KW-0408">Iron</keyword>
<keyword id="KW-0479">Metal-binding</keyword>
<keyword id="KW-0561">Oxygen transport</keyword>
<keyword id="KW-0813">Transport</keyword>
<dbReference type="EMBL" id="CP000438">
    <property type="protein sequence ID" value="ABJ10858.1"/>
    <property type="molecule type" value="Genomic_DNA"/>
</dbReference>
<dbReference type="RefSeq" id="WP_003087637.1">
    <property type="nucleotide sequence ID" value="NZ_CP034244.1"/>
</dbReference>
<dbReference type="SMR" id="Q02KG3"/>
<dbReference type="KEGG" id="pau:PA14_42860"/>
<dbReference type="PseudoCAP" id="PA14_42860"/>
<dbReference type="HOGENOM" id="CLU_086902_2_1_6"/>
<dbReference type="BioCyc" id="PAER208963:G1G74-3593-MONOMER"/>
<dbReference type="Proteomes" id="UP000000653">
    <property type="component" value="Chromosome"/>
</dbReference>
<dbReference type="GO" id="GO:0005506">
    <property type="term" value="F:iron ion binding"/>
    <property type="evidence" value="ECO:0007669"/>
    <property type="project" value="UniProtKB-UniRule"/>
</dbReference>
<dbReference type="GO" id="GO:0005344">
    <property type="term" value="F:oxygen carrier activity"/>
    <property type="evidence" value="ECO:0007669"/>
    <property type="project" value="UniProtKB-UniRule"/>
</dbReference>
<dbReference type="CDD" id="cd12107">
    <property type="entry name" value="Hemerythrin"/>
    <property type="match status" value="1"/>
</dbReference>
<dbReference type="Gene3D" id="1.20.120.50">
    <property type="entry name" value="Hemerythrin-like"/>
    <property type="match status" value="1"/>
</dbReference>
<dbReference type="HAMAP" id="MF_00556">
    <property type="entry name" value="Hemerythrin"/>
    <property type="match status" value="1"/>
</dbReference>
<dbReference type="InterPro" id="IPR023504">
    <property type="entry name" value="Bacteriohemerythrin-like"/>
</dbReference>
<dbReference type="InterPro" id="IPR016131">
    <property type="entry name" value="Haemerythrin_Fe_BS"/>
</dbReference>
<dbReference type="InterPro" id="IPR050669">
    <property type="entry name" value="Hemerythrin"/>
</dbReference>
<dbReference type="InterPro" id="IPR012312">
    <property type="entry name" value="Hemerythrin-like"/>
</dbReference>
<dbReference type="InterPro" id="IPR035938">
    <property type="entry name" value="Hemerythrin-like_sf"/>
</dbReference>
<dbReference type="InterPro" id="IPR012827">
    <property type="entry name" value="Hemerythrin_metal-bd"/>
</dbReference>
<dbReference type="NCBIfam" id="NF033749">
    <property type="entry name" value="bact_hemeryth"/>
    <property type="match status" value="1"/>
</dbReference>
<dbReference type="NCBIfam" id="TIGR02481">
    <property type="entry name" value="hemeryth_dom"/>
    <property type="match status" value="1"/>
</dbReference>
<dbReference type="NCBIfam" id="NF002007">
    <property type="entry name" value="PRK00808.1"/>
    <property type="match status" value="1"/>
</dbReference>
<dbReference type="PANTHER" id="PTHR37164">
    <property type="entry name" value="BACTERIOHEMERYTHRIN"/>
    <property type="match status" value="1"/>
</dbReference>
<dbReference type="PANTHER" id="PTHR37164:SF1">
    <property type="entry name" value="BACTERIOHEMERYTHRIN"/>
    <property type="match status" value="1"/>
</dbReference>
<dbReference type="Pfam" id="PF01814">
    <property type="entry name" value="Hemerythrin"/>
    <property type="match status" value="1"/>
</dbReference>
<dbReference type="SUPFAM" id="SSF47188">
    <property type="entry name" value="Hemerythrin-like"/>
    <property type="match status" value="1"/>
</dbReference>
<dbReference type="PROSITE" id="PS00550">
    <property type="entry name" value="HEMERYTHRINS"/>
    <property type="match status" value="1"/>
</dbReference>
<comment type="function">
    <text evidence="1">Oxygen-binding protein. May be involved in a storage mechanism or for delivery to oxygen-requiring enzymes. The oxygen-binding site contains two iron atoms.</text>
</comment>
<comment type="subunit">
    <text evidence="1">Monomer.</text>
</comment>
<comment type="similarity">
    <text evidence="1">Belongs to the hemerythrin family.</text>
</comment>
<sequence>MAHLVWQDDLNTGIQVIDNQHKRIVEMINHLHDAQQGKEHAAIAEVIEELVDYTLSHFAFEETLMEDAGYQFSRAHKKIHELFIRRVSEYRVRFQAGEDVGDELKGLLSRWLFNHIRNDDAGYVDAVRHSMSELVKDKSEGGWLSRSMKRFFG</sequence>
<accession>Q02KG3</accession>
<proteinExistence type="inferred from homology"/>
<organism>
    <name type="scientific">Pseudomonas aeruginosa (strain UCBPP-PA14)</name>
    <dbReference type="NCBI Taxonomy" id="208963"/>
    <lineage>
        <taxon>Bacteria</taxon>
        <taxon>Pseudomonadati</taxon>
        <taxon>Pseudomonadota</taxon>
        <taxon>Gammaproteobacteria</taxon>
        <taxon>Pseudomonadales</taxon>
        <taxon>Pseudomonadaceae</taxon>
        <taxon>Pseudomonas</taxon>
    </lineage>
</organism>
<evidence type="ECO:0000255" key="1">
    <source>
        <dbReference type="HAMAP-Rule" id="MF_00556"/>
    </source>
</evidence>